<reference key="1">
    <citation type="journal article" date="2012" name="MBio">
        <title>Comparative genome analysis of Trichophyton rubrum and related dermatophytes reveals candidate genes involved in infection.</title>
        <authorList>
            <person name="Martinez D.A."/>
            <person name="Oliver B.G."/>
            <person name="Graeser Y."/>
            <person name="Goldberg J.M."/>
            <person name="Li W."/>
            <person name="Martinez-Rossi N.M."/>
            <person name="Monod M."/>
            <person name="Shelest E."/>
            <person name="Barton R.C."/>
            <person name="Birch E."/>
            <person name="Brakhage A.A."/>
            <person name="Chen Z."/>
            <person name="Gurr S.J."/>
            <person name="Heiman D."/>
            <person name="Heitman J."/>
            <person name="Kosti I."/>
            <person name="Rossi A."/>
            <person name="Saif S."/>
            <person name="Samalova M."/>
            <person name="Saunders C.W."/>
            <person name="Shea T."/>
            <person name="Summerbell R.C."/>
            <person name="Xu J."/>
            <person name="Young S."/>
            <person name="Zeng Q."/>
            <person name="Birren B.W."/>
            <person name="Cuomo C.A."/>
            <person name="White T.C."/>
        </authorList>
    </citation>
    <scope>NUCLEOTIDE SEQUENCE [LARGE SCALE GENOMIC DNA]</scope>
    <source>
        <strain>ATCC MYA-4607 / CBS 118892</strain>
    </source>
</reference>
<reference key="2">
    <citation type="journal article" date="2013" name="ACS Synth. Biol.">
        <title>Discovery of cryptic polyketide metabolites from dermatophytes using heterologous expression in Aspergillus nidulans.</title>
        <authorList>
            <person name="Yin W.B."/>
            <person name="Chooi Y.H."/>
            <person name="Smith A.R."/>
            <person name="Cacho R.A."/>
            <person name="Hu Y."/>
            <person name="White T.C."/>
            <person name="Tang Y."/>
        </authorList>
    </citation>
    <scope>FUNCTION</scope>
</reference>
<organism>
    <name type="scientific">Trichophyton rubrum (strain ATCC MYA-4607 / CBS 118892)</name>
    <name type="common">Athlete's foot fungus</name>
    <dbReference type="NCBI Taxonomy" id="559305"/>
    <lineage>
        <taxon>Eukaryota</taxon>
        <taxon>Fungi</taxon>
        <taxon>Dikarya</taxon>
        <taxon>Ascomycota</taxon>
        <taxon>Pezizomycotina</taxon>
        <taxon>Eurotiomycetes</taxon>
        <taxon>Eurotiomycetidae</taxon>
        <taxon>Onygenales</taxon>
        <taxon>Arthrodermataceae</taxon>
        <taxon>Trichophyton</taxon>
    </lineage>
</organism>
<sequence length="436" mass="49061">MTSIPIFESVSRFLPPANEDVQFWWKVTGRHMACMMHEAGYPEYRQVECLLFHRFKVIPCLGPRPHSDTPWYKSRVGGGAADGCPINYSWRFGTIERKPHIRNFIEPLGALTKTPADPLNEVATKALLQDYSMTLPNVDLEAFWTFAPHYRPRIIEKEDMEKLAGASLLVGAEMSPDSRTIDIKAYMYPRVPSQTSQLLTTILPQAMRDTYGEDVCLDSLNFVHDFMTNDPQGSQLALTGTTGIDCCKLQETRVKIYVITRNTSFDHIAAIMTLGGRRSISGELLGQLKALWYELKGAPAELPSSEQLPVQTKPDGSRNPIVVPFYFDIQPRLALPDVKAYIDVSTSPVSDLAAAKAVVRHLEQHGSGQNPKAYLNVLKDITPVEELETQKGALAFYSVAVKKNELDITSYFNPQVYKRYFAHEVQLNGQRRSVFE</sequence>
<accession>F2T0M1</accession>
<comment type="function">
    <text evidence="1 2 3">Prenyltransferase; part of the gene cluster that mediates the biosynthesis of neosartoricin B, a prenylated anthracenone that probably exhibits T-cell antiproliferative activity, suggestive of a physiological role as an immunosuppressive agent (PubMed:23758576). The non-reducing polyketide synthase nscA probably synthesizes and cyclizes the decaketide backbone (By similarity). The hydrolase nscB then mediates the product release through hydrolysis followed by spontaneous decarboxylation (By similarity). The prenyltransferase nscD catalyzes the addition of the dimethylallyl group to the aromatic C5 (By similarity). The FAD-dependent monooxygenase nscC is then responsible for the stereospecific hydroxylation at C2 (By similarity). Neosartoricin B can be converted into two additional compounds neosartoricins C and D (By similarity). Neosartoricin C is a spirocyclic compound that is cyclized through the attack of C3 hydroxyl on C14, followed by dehydration (By similarity). On the other hand, neosartoricin D is a further cyclized compound in which attack of C2 on C14 in neosartoricin C results in the formation of the acetal-containing dioxabicyclo-octanone ring (By similarity). Both of these compounds are novel and possibly represent related metabolites of the gene cluster (By similarity).</text>
</comment>
<comment type="pathway">
    <text evidence="6">Secondary metabolite biosynthesis.</text>
</comment>
<comment type="similarity">
    <text evidence="5">Belongs to the tryptophan dimethylallyltransferase family.</text>
</comment>
<evidence type="ECO:0000250" key="1">
    <source>
        <dbReference type="UniProtKB" id="A1D8I8"/>
    </source>
</evidence>
<evidence type="ECO:0000250" key="2">
    <source>
        <dbReference type="UniProtKB" id="F2S700"/>
    </source>
</evidence>
<evidence type="ECO:0000269" key="3">
    <source>
    </source>
</evidence>
<evidence type="ECO:0000303" key="4">
    <source>
    </source>
</evidence>
<evidence type="ECO:0000305" key="5"/>
<evidence type="ECO:0000305" key="6">
    <source>
    </source>
</evidence>
<proteinExistence type="inferred from homology"/>
<keyword id="KW-1185">Reference proteome</keyword>
<keyword id="KW-0808">Transferase</keyword>
<feature type="chain" id="PRO_0000437922" description="Prenyltransferase nscD">
    <location>
        <begin position="1"/>
        <end position="436"/>
    </location>
</feature>
<protein>
    <recommendedName>
        <fullName evidence="4">Prenyltransferase nscD</fullName>
        <ecNumber evidence="6">2.5.1.-</ecNumber>
    </recommendedName>
    <alternativeName>
        <fullName evidence="4">Neosartoricin B biosynthesis protein D</fullName>
    </alternativeName>
</protein>
<name>NSCD_TRIRC</name>
<gene>
    <name evidence="4" type="primary">nscD</name>
    <name type="ORF">TERG_08358</name>
</gene>
<dbReference type="EC" id="2.5.1.-" evidence="6"/>
<dbReference type="EMBL" id="GG700661">
    <property type="protein sequence ID" value="EGD92143.1"/>
    <property type="molecule type" value="Genomic_DNA"/>
</dbReference>
<dbReference type="RefSeq" id="XP_003231060.1">
    <property type="nucleotide sequence ID" value="XM_003231012.1"/>
</dbReference>
<dbReference type="SMR" id="F2T0M1"/>
<dbReference type="STRING" id="559305.F2T0M1"/>
<dbReference type="GeneID" id="10377340"/>
<dbReference type="VEuPathDB" id="FungiDB:TERG_08358"/>
<dbReference type="eggNOG" id="ENOG502S2XP">
    <property type="taxonomic scope" value="Eukaryota"/>
</dbReference>
<dbReference type="HOGENOM" id="CLU_037431_2_0_1"/>
<dbReference type="InParanoid" id="F2T0M1"/>
<dbReference type="OMA" id="TGIDCCK"/>
<dbReference type="OrthoDB" id="3354387at2759"/>
<dbReference type="Proteomes" id="UP000008864">
    <property type="component" value="Unassembled WGS sequence"/>
</dbReference>
<dbReference type="GO" id="GO:0004659">
    <property type="term" value="F:prenyltransferase activity"/>
    <property type="evidence" value="ECO:0007669"/>
    <property type="project" value="TreeGrafter"/>
</dbReference>
<dbReference type="GO" id="GO:0009820">
    <property type="term" value="P:alkaloid metabolic process"/>
    <property type="evidence" value="ECO:0007669"/>
    <property type="project" value="InterPro"/>
</dbReference>
<dbReference type="CDD" id="cd13929">
    <property type="entry name" value="PT-DMATS_CymD"/>
    <property type="match status" value="1"/>
</dbReference>
<dbReference type="InterPro" id="IPR033964">
    <property type="entry name" value="Aro_prenylTrfase"/>
</dbReference>
<dbReference type="InterPro" id="IPR017795">
    <property type="entry name" value="Aro_prenylTrfase_DMATS"/>
</dbReference>
<dbReference type="NCBIfam" id="TIGR03429">
    <property type="entry name" value="arom_pren_DMATS"/>
    <property type="match status" value="1"/>
</dbReference>
<dbReference type="PANTHER" id="PTHR40627">
    <property type="entry name" value="INDOLE PRENYLTRANSFERASE TDIB-RELATED"/>
    <property type="match status" value="1"/>
</dbReference>
<dbReference type="PANTHER" id="PTHR40627:SF4">
    <property type="entry name" value="PRENYLTRANSFERASE ASQH1-RELATED"/>
    <property type="match status" value="1"/>
</dbReference>
<dbReference type="Pfam" id="PF11991">
    <property type="entry name" value="Trp_DMAT"/>
    <property type="match status" value="1"/>
</dbReference>
<dbReference type="SFLD" id="SFLDS00036">
    <property type="entry name" value="Aromatic_Prenyltransferase"/>
    <property type="match status" value="1"/>
</dbReference>